<protein>
    <recommendedName>
        <fullName>Probable thymidylate kinase</fullName>
        <ecNumber>2.7.4.9</ecNumber>
    </recommendedName>
    <alternativeName>
        <fullName>dTMP kinase</fullName>
    </alternativeName>
</protein>
<dbReference type="EC" id="2.7.4.9"/>
<dbReference type="EMBL" id="AE000666">
    <property type="protein sequence ID" value="AAB86231.1"/>
    <property type="molecule type" value="Genomic_DNA"/>
</dbReference>
<dbReference type="PIR" id="F69102">
    <property type="entry name" value="F69102"/>
</dbReference>
<dbReference type="RefSeq" id="WP_010877367.1">
    <property type="nucleotide sequence ID" value="NC_000916.1"/>
</dbReference>
<dbReference type="SMR" id="O27793"/>
<dbReference type="FunCoup" id="O27793">
    <property type="interactions" value="138"/>
</dbReference>
<dbReference type="STRING" id="187420.MTH_1765"/>
<dbReference type="PaxDb" id="187420-MTH_1765"/>
<dbReference type="EnsemblBacteria" id="AAB86231">
    <property type="protein sequence ID" value="AAB86231"/>
    <property type="gene ID" value="MTH_1765"/>
</dbReference>
<dbReference type="GeneID" id="1470850"/>
<dbReference type="GeneID" id="77402284"/>
<dbReference type="KEGG" id="mth:MTH_1765"/>
<dbReference type="PATRIC" id="fig|187420.15.peg.1721"/>
<dbReference type="HOGENOM" id="CLU_049131_1_3_2"/>
<dbReference type="InParanoid" id="O27793"/>
<dbReference type="Proteomes" id="UP000005223">
    <property type="component" value="Chromosome"/>
</dbReference>
<dbReference type="GO" id="GO:0005737">
    <property type="term" value="C:cytoplasm"/>
    <property type="evidence" value="ECO:0007669"/>
    <property type="project" value="TreeGrafter"/>
</dbReference>
<dbReference type="GO" id="GO:0005524">
    <property type="term" value="F:ATP binding"/>
    <property type="evidence" value="ECO:0007669"/>
    <property type="project" value="UniProtKB-UniRule"/>
</dbReference>
<dbReference type="GO" id="GO:0004798">
    <property type="term" value="F:dTMP kinase activity"/>
    <property type="evidence" value="ECO:0007669"/>
    <property type="project" value="UniProtKB-UniRule"/>
</dbReference>
<dbReference type="GO" id="GO:0006233">
    <property type="term" value="P:dTDP biosynthetic process"/>
    <property type="evidence" value="ECO:0007669"/>
    <property type="project" value="InterPro"/>
</dbReference>
<dbReference type="GO" id="GO:0006235">
    <property type="term" value="P:dTTP biosynthetic process"/>
    <property type="evidence" value="ECO:0007669"/>
    <property type="project" value="UniProtKB-UniRule"/>
</dbReference>
<dbReference type="GO" id="GO:0006227">
    <property type="term" value="P:dUDP biosynthetic process"/>
    <property type="evidence" value="ECO:0007669"/>
    <property type="project" value="TreeGrafter"/>
</dbReference>
<dbReference type="CDD" id="cd01672">
    <property type="entry name" value="TMPK"/>
    <property type="match status" value="1"/>
</dbReference>
<dbReference type="Gene3D" id="3.40.50.300">
    <property type="entry name" value="P-loop containing nucleotide triphosphate hydrolases"/>
    <property type="match status" value="1"/>
</dbReference>
<dbReference type="HAMAP" id="MF_00165">
    <property type="entry name" value="Thymidylate_kinase"/>
    <property type="match status" value="1"/>
</dbReference>
<dbReference type="InterPro" id="IPR027417">
    <property type="entry name" value="P-loop_NTPase"/>
</dbReference>
<dbReference type="InterPro" id="IPR039430">
    <property type="entry name" value="Thymidylate_kin-like_dom"/>
</dbReference>
<dbReference type="InterPro" id="IPR018095">
    <property type="entry name" value="Thymidylate_kin_CS"/>
</dbReference>
<dbReference type="InterPro" id="IPR018094">
    <property type="entry name" value="Thymidylate_kinase"/>
</dbReference>
<dbReference type="NCBIfam" id="TIGR00041">
    <property type="entry name" value="DTMP_kinase"/>
    <property type="match status" value="1"/>
</dbReference>
<dbReference type="PANTHER" id="PTHR10344">
    <property type="entry name" value="THYMIDYLATE KINASE"/>
    <property type="match status" value="1"/>
</dbReference>
<dbReference type="PANTHER" id="PTHR10344:SF4">
    <property type="entry name" value="UMP-CMP KINASE 2, MITOCHONDRIAL"/>
    <property type="match status" value="1"/>
</dbReference>
<dbReference type="Pfam" id="PF02223">
    <property type="entry name" value="Thymidylate_kin"/>
    <property type="match status" value="1"/>
</dbReference>
<dbReference type="SUPFAM" id="SSF52540">
    <property type="entry name" value="P-loop containing nucleoside triphosphate hydrolases"/>
    <property type="match status" value="1"/>
</dbReference>
<dbReference type="PROSITE" id="PS01331">
    <property type="entry name" value="THYMIDYLATE_KINASE"/>
    <property type="match status" value="1"/>
</dbReference>
<gene>
    <name type="primary">tmk</name>
    <name type="ordered locus">MTH_1765</name>
</gene>
<sequence length="194" mass="21875">MYICFEGIDGSGKTTHAALTASWLRENGYMVHEVREPTDSNIGSLIRSMLSSPDARTPDVQRMLALLFAADRLTLRSKIEGDWAEDVVVSDRCYYSSMVYQGPEEWVCEINRFAPRPDVVILLDIDVEVAMERCGGTDEFEDPLYLAGVRERYLELADKNGFYTVNAERGVNLIQRDIRRILAPHFGICSGGIM</sequence>
<accession>O27793</accession>
<proteinExistence type="inferred from homology"/>
<keyword id="KW-0067">ATP-binding</keyword>
<keyword id="KW-0418">Kinase</keyword>
<keyword id="KW-0545">Nucleotide biosynthesis</keyword>
<keyword id="KW-0547">Nucleotide-binding</keyword>
<keyword id="KW-1185">Reference proteome</keyword>
<keyword id="KW-0808">Transferase</keyword>
<organism>
    <name type="scientific">Methanothermobacter thermautotrophicus (strain ATCC 29096 / DSM 1053 / JCM 10044 / NBRC 100330 / Delta H)</name>
    <name type="common">Methanobacterium thermoautotrophicum</name>
    <dbReference type="NCBI Taxonomy" id="187420"/>
    <lineage>
        <taxon>Archaea</taxon>
        <taxon>Methanobacteriati</taxon>
        <taxon>Methanobacteriota</taxon>
        <taxon>Methanomada group</taxon>
        <taxon>Methanobacteria</taxon>
        <taxon>Methanobacteriales</taxon>
        <taxon>Methanobacteriaceae</taxon>
        <taxon>Methanothermobacter</taxon>
    </lineage>
</organism>
<feature type="chain" id="PRO_0000155390" description="Probable thymidylate kinase">
    <location>
        <begin position="1"/>
        <end position="194"/>
    </location>
</feature>
<feature type="binding site" evidence="1">
    <location>
        <begin position="7"/>
        <end position="14"/>
    </location>
    <ligand>
        <name>ATP</name>
        <dbReference type="ChEBI" id="CHEBI:30616"/>
    </ligand>
</feature>
<evidence type="ECO:0000255" key="1"/>
<evidence type="ECO:0000305" key="2"/>
<comment type="catalytic activity">
    <reaction>
        <text>dTMP + ATP = dTDP + ADP</text>
        <dbReference type="Rhea" id="RHEA:13517"/>
        <dbReference type="ChEBI" id="CHEBI:30616"/>
        <dbReference type="ChEBI" id="CHEBI:58369"/>
        <dbReference type="ChEBI" id="CHEBI:63528"/>
        <dbReference type="ChEBI" id="CHEBI:456216"/>
        <dbReference type="EC" id="2.7.4.9"/>
    </reaction>
</comment>
<comment type="similarity">
    <text evidence="2">Belongs to the thymidylate kinase family.</text>
</comment>
<reference key="1">
    <citation type="journal article" date="1997" name="J. Bacteriol.">
        <title>Complete genome sequence of Methanobacterium thermoautotrophicum deltaH: functional analysis and comparative genomics.</title>
        <authorList>
            <person name="Smith D.R."/>
            <person name="Doucette-Stamm L.A."/>
            <person name="Deloughery C."/>
            <person name="Lee H.-M."/>
            <person name="Dubois J."/>
            <person name="Aldredge T."/>
            <person name="Bashirzadeh R."/>
            <person name="Blakely D."/>
            <person name="Cook R."/>
            <person name="Gilbert K."/>
            <person name="Harrison D."/>
            <person name="Hoang L."/>
            <person name="Keagle P."/>
            <person name="Lumm W."/>
            <person name="Pothier B."/>
            <person name="Qiu D."/>
            <person name="Spadafora R."/>
            <person name="Vicare R."/>
            <person name="Wang Y."/>
            <person name="Wierzbowski J."/>
            <person name="Gibson R."/>
            <person name="Jiwani N."/>
            <person name="Caruso A."/>
            <person name="Bush D."/>
            <person name="Safer H."/>
            <person name="Patwell D."/>
            <person name="Prabhakar S."/>
            <person name="McDougall S."/>
            <person name="Shimer G."/>
            <person name="Goyal A."/>
            <person name="Pietrovski S."/>
            <person name="Church G.M."/>
            <person name="Daniels C.J."/>
            <person name="Mao J.-I."/>
            <person name="Rice P."/>
            <person name="Noelling J."/>
            <person name="Reeve J.N."/>
        </authorList>
    </citation>
    <scope>NUCLEOTIDE SEQUENCE [LARGE SCALE GENOMIC DNA]</scope>
    <source>
        <strain>ATCC 29096 / DSM 1053 / JCM 10044 / NBRC 100330 / Delta H</strain>
    </source>
</reference>
<name>KTHY_METTH</name>